<feature type="chain" id="PRO_0000138791" description="Large ribosomal subunit protein eL40">
    <location>
        <begin position="1"/>
        <end position="56"/>
    </location>
</feature>
<organism>
    <name type="scientific">Sulfurisphaera tokodaii (strain DSM 16993 / JCM 10545 / NBRC 100140 / 7)</name>
    <name type="common">Sulfolobus tokodaii</name>
    <dbReference type="NCBI Taxonomy" id="273063"/>
    <lineage>
        <taxon>Archaea</taxon>
        <taxon>Thermoproteota</taxon>
        <taxon>Thermoprotei</taxon>
        <taxon>Sulfolobales</taxon>
        <taxon>Sulfolobaceae</taxon>
        <taxon>Sulfurisphaera</taxon>
    </lineage>
</organism>
<keyword id="KW-1185">Reference proteome</keyword>
<keyword id="KW-0687">Ribonucleoprotein</keyword>
<keyword id="KW-0689">Ribosomal protein</keyword>
<protein>
    <recommendedName>
        <fullName evidence="1">Large ribosomal subunit protein eL40</fullName>
    </recommendedName>
    <alternativeName>
        <fullName evidence="2">50S ribosomal protein L40e</fullName>
    </alternativeName>
</protein>
<name>RL40_SULTO</name>
<gene>
    <name evidence="1" type="primary">rpl40e</name>
    <name type="ordered locus">STK_02035</name>
    <name type="ORF">STS025</name>
</gene>
<comment type="similarity">
    <text evidence="1">Belongs to the eukaryotic ribosomal protein eL40 family.</text>
</comment>
<accession>Q976I5</accession>
<sequence length="56" mass="6431">MPLTDPVKLQIVQQRIFLKKVCRDCGALNSVRATKCRRCHSKNLRPKKKELPAKKG</sequence>
<proteinExistence type="inferred from homology"/>
<dbReference type="EMBL" id="BA000023">
    <property type="protein sequence ID" value="BAB65162.1"/>
    <property type="molecule type" value="Genomic_DNA"/>
</dbReference>
<dbReference type="RefSeq" id="WP_010978144.1">
    <property type="nucleotide sequence ID" value="NC_003106.2"/>
</dbReference>
<dbReference type="SMR" id="Q976I5"/>
<dbReference type="STRING" id="273063.STK_02035"/>
<dbReference type="GeneID" id="1458092"/>
<dbReference type="KEGG" id="sto:STK_02035"/>
<dbReference type="PATRIC" id="fig|273063.9.peg.250"/>
<dbReference type="eggNOG" id="arCOG04049">
    <property type="taxonomic scope" value="Archaea"/>
</dbReference>
<dbReference type="OrthoDB" id="45138at2157"/>
<dbReference type="Proteomes" id="UP000001015">
    <property type="component" value="Chromosome"/>
</dbReference>
<dbReference type="GO" id="GO:1990904">
    <property type="term" value="C:ribonucleoprotein complex"/>
    <property type="evidence" value="ECO:0007669"/>
    <property type="project" value="UniProtKB-KW"/>
</dbReference>
<dbReference type="GO" id="GO:0005840">
    <property type="term" value="C:ribosome"/>
    <property type="evidence" value="ECO:0007669"/>
    <property type="project" value="UniProtKB-KW"/>
</dbReference>
<dbReference type="GO" id="GO:0003735">
    <property type="term" value="F:structural constituent of ribosome"/>
    <property type="evidence" value="ECO:0007669"/>
    <property type="project" value="InterPro"/>
</dbReference>
<dbReference type="GO" id="GO:0006412">
    <property type="term" value="P:translation"/>
    <property type="evidence" value="ECO:0007669"/>
    <property type="project" value="UniProtKB-UniRule"/>
</dbReference>
<dbReference type="Gene3D" id="4.10.1060.50">
    <property type="match status" value="1"/>
</dbReference>
<dbReference type="HAMAP" id="MF_00788">
    <property type="entry name" value="Ribosomal_eL40"/>
    <property type="match status" value="1"/>
</dbReference>
<dbReference type="InterPro" id="IPR023657">
    <property type="entry name" value="Ribosomal_eL40_arc"/>
</dbReference>
<dbReference type="InterPro" id="IPR001975">
    <property type="entry name" value="Ribosomal_eL40_dom"/>
</dbReference>
<dbReference type="InterPro" id="IPR038587">
    <property type="entry name" value="Ribosomal_eL40_sf"/>
</dbReference>
<dbReference type="InterPro" id="IPR011332">
    <property type="entry name" value="Ribosomal_zn-bd"/>
</dbReference>
<dbReference type="NCBIfam" id="NF003161">
    <property type="entry name" value="PRK04136.1"/>
    <property type="match status" value="1"/>
</dbReference>
<dbReference type="PANTHER" id="PTHR39649">
    <property type="entry name" value="50S RIBOSOMAL PROTEIN L40E"/>
    <property type="match status" value="1"/>
</dbReference>
<dbReference type="PANTHER" id="PTHR39649:SF1">
    <property type="entry name" value="LARGE RIBOSOMAL SUBUNIT PROTEIN EL40"/>
    <property type="match status" value="1"/>
</dbReference>
<dbReference type="Pfam" id="PF01020">
    <property type="entry name" value="Ribosomal_L40e"/>
    <property type="match status" value="1"/>
</dbReference>
<dbReference type="SMART" id="SM01377">
    <property type="entry name" value="Ribosomal_L40e"/>
    <property type="match status" value="1"/>
</dbReference>
<dbReference type="SUPFAM" id="SSF57829">
    <property type="entry name" value="Zn-binding ribosomal proteins"/>
    <property type="match status" value="1"/>
</dbReference>
<reference key="1">
    <citation type="journal article" date="2001" name="DNA Res.">
        <title>Complete genome sequence of an aerobic thermoacidophilic Crenarchaeon, Sulfolobus tokodaii strain7.</title>
        <authorList>
            <person name="Kawarabayasi Y."/>
            <person name="Hino Y."/>
            <person name="Horikawa H."/>
            <person name="Jin-no K."/>
            <person name="Takahashi M."/>
            <person name="Sekine M."/>
            <person name="Baba S."/>
            <person name="Ankai A."/>
            <person name="Kosugi H."/>
            <person name="Hosoyama A."/>
            <person name="Fukui S."/>
            <person name="Nagai Y."/>
            <person name="Nishijima K."/>
            <person name="Otsuka R."/>
            <person name="Nakazawa H."/>
            <person name="Takamiya M."/>
            <person name="Kato Y."/>
            <person name="Yoshizawa T."/>
            <person name="Tanaka T."/>
            <person name="Kudoh Y."/>
            <person name="Yamazaki J."/>
            <person name="Kushida N."/>
            <person name="Oguchi A."/>
            <person name="Aoki K."/>
            <person name="Masuda S."/>
            <person name="Yanagii M."/>
            <person name="Nishimura M."/>
            <person name="Yamagishi A."/>
            <person name="Oshima T."/>
            <person name="Kikuchi H."/>
        </authorList>
    </citation>
    <scope>NUCLEOTIDE SEQUENCE [LARGE SCALE GENOMIC DNA]</scope>
    <source>
        <strain>DSM 16993 / JCM 10545 / NBRC 100140 / 7</strain>
    </source>
</reference>
<evidence type="ECO:0000255" key="1">
    <source>
        <dbReference type="HAMAP-Rule" id="MF_00788"/>
    </source>
</evidence>
<evidence type="ECO:0000305" key="2"/>